<evidence type="ECO:0000255" key="1">
    <source>
        <dbReference type="PROSITE-ProRule" id="PRU00395"/>
    </source>
</evidence>
<evidence type="ECO:0000269" key="2">
    <source>
    </source>
</evidence>
<evidence type="ECO:0000303" key="3">
    <source>
    </source>
</evidence>
<evidence type="ECO:0000305" key="4"/>
<evidence type="ECO:0000305" key="5">
    <source>
    </source>
</evidence>
<proteinExistence type="evidence at protein level"/>
<feature type="peptide" id="PRO_0000441785" description="Cyclotide cycloviolacin O17" evidence="2">
    <location>
        <begin position="1"/>
        <end position="30"/>
    </location>
</feature>
<feature type="disulfide bond" evidence="1">
    <location>
        <begin position="4"/>
        <end position="20"/>
    </location>
</feature>
<feature type="disulfide bond" evidence="1">
    <location>
        <begin position="8"/>
        <end position="22"/>
    </location>
</feature>
<feature type="disulfide bond" evidence="1">
    <location>
        <begin position="13"/>
        <end position="27"/>
    </location>
</feature>
<feature type="cross-link" description="Cyclopeptide (Gly-Asn)" evidence="5">
    <location>
        <begin position="1"/>
        <end position="30"/>
    </location>
</feature>
<feature type="unsure residue" description="I or L" evidence="3">
    <location>
        <position position="2"/>
    </location>
</feature>
<feature type="unsure residue" description="I or L" evidence="3">
    <location>
        <position position="11"/>
    </location>
</feature>
<feature type="unsure residue" description="I or L" evidence="3">
    <location>
        <position position="14"/>
    </location>
</feature>
<feature type="unsure residue" description="I or L" evidence="3">
    <location>
        <position position="18"/>
    </location>
</feature>
<organism>
    <name type="scientific">Psychotria brachyceras</name>
    <dbReference type="NCBI Taxonomy" id="980682"/>
    <lineage>
        <taxon>Eukaryota</taxon>
        <taxon>Viridiplantae</taxon>
        <taxon>Streptophyta</taxon>
        <taxon>Embryophyta</taxon>
        <taxon>Tracheophyta</taxon>
        <taxon>Spermatophyta</taxon>
        <taxon>Magnoliopsida</taxon>
        <taxon>eudicotyledons</taxon>
        <taxon>Gunneridae</taxon>
        <taxon>Pentapetalae</taxon>
        <taxon>asterids</taxon>
        <taxon>lamiids</taxon>
        <taxon>Gentianales</taxon>
        <taxon>Rubiaceae</taxon>
        <taxon>Rubioideae</taxon>
        <taxon>Psychotrieae</taxon>
        <taxon>Psychotria</taxon>
    </lineage>
</organism>
<sequence length="30" mass="3176">GIPCGESCVWIPCISAAIGCSCKNKVCYRN</sequence>
<protein>
    <recommendedName>
        <fullName evidence="3">Cyclotide cycloviolacin O17</fullName>
    </recommendedName>
</protein>
<dbReference type="SMR" id="C0HL23"/>
<dbReference type="GO" id="GO:0006952">
    <property type="term" value="P:defense response"/>
    <property type="evidence" value="ECO:0007669"/>
    <property type="project" value="UniProtKB-KW"/>
</dbReference>
<dbReference type="InterPro" id="IPR005535">
    <property type="entry name" value="Cyclotide"/>
</dbReference>
<dbReference type="InterPro" id="IPR012323">
    <property type="entry name" value="Cyclotide_bracelet_CS"/>
</dbReference>
<dbReference type="InterPro" id="IPR036146">
    <property type="entry name" value="Cyclotide_sf"/>
</dbReference>
<dbReference type="Pfam" id="PF03784">
    <property type="entry name" value="Cyclotide"/>
    <property type="match status" value="1"/>
</dbReference>
<dbReference type="PIRSF" id="PIRSF037891">
    <property type="entry name" value="Cycloviolacin"/>
    <property type="match status" value="1"/>
</dbReference>
<dbReference type="SUPFAM" id="SSF57038">
    <property type="entry name" value="Cyclotides"/>
    <property type="match status" value="1"/>
</dbReference>
<dbReference type="PROSITE" id="PS51052">
    <property type="entry name" value="CYCLOTIDE"/>
    <property type="match status" value="1"/>
</dbReference>
<dbReference type="PROSITE" id="PS60008">
    <property type="entry name" value="CYCLOTIDE_BRACELET"/>
    <property type="match status" value="1"/>
</dbReference>
<reference evidence="4" key="1">
    <citation type="journal article" date="2016" name="J. Nat. Prod.">
        <title>Isolation and Characterization of Cyclotides from Brazilian Psychotria: Significance in Plant Defense and Co-occurrence with Antioxidant Alkaloids.</title>
        <authorList>
            <person name="Matsuura H.N."/>
            <person name="Poth A.G."/>
            <person name="Yendo A.C."/>
            <person name="Fett-Neto A.G."/>
            <person name="Craik D.J."/>
        </authorList>
    </citation>
    <scope>PROTEIN SEQUENCE</scope>
    <scope>MASS SPECTROMETRY</scope>
    <scope>IDENTIFICATION BY MASS SPECTROMETRY</scope>
    <scope>CYCLIZATION</scope>
    <source>
        <tissue evidence="3">Leaf</tissue>
    </source>
</reference>
<accession>C0HL23</accession>
<keyword id="KW-0903">Direct protein sequencing</keyword>
<keyword id="KW-1015">Disulfide bond</keyword>
<keyword id="KW-0960">Knottin</keyword>
<keyword id="KW-0611">Plant defense</keyword>
<name>CYO17_PSYBR</name>
<comment type="function">
    <text evidence="1">Probably participates in a plant defense mechanism.</text>
</comment>
<comment type="domain">
    <text evidence="4">The presence of a 'disulfide through disulfide knot' structurally defines this protein as a knottin.</text>
</comment>
<comment type="PTM">
    <text evidence="1 2">This is a cyclic peptide.</text>
</comment>
<comment type="mass spectrometry" mass="3515.44" method="MALDI" evidence="2"/>
<comment type="similarity">
    <text evidence="1">Belongs to the cyclotide family. Bracelet subfamily.</text>
</comment>
<comment type="caution">
    <text evidence="1">This peptide is cyclic. The start position was chosen by similarity to Oak1 (kalata B1) for which the DNA sequence is known.</text>
</comment>